<comment type="function">
    <text evidence="3 5">Aerial growth, conidiation, and dispersal of filamentous fungi in the environment rely upon a capability of their secreting small amphipathic proteins called hydrophobins (HPBs) with low sequence identity. Class I can self-assemble into an outermost layer of rodlet bundles on aerial cell surfaces, conferring cellular hydrophobicity that supports fungal growth, development and dispersal; whereas Class II form highly ordered films at water-air interfaces through intermolecular interactions but contribute nothing to the rodlet structure (Probable). CoH1 is an asexual monokaryon-specific class I hydrophobin that is involved in aerial growth of mycelia (PubMed:9344631).</text>
</comment>
<comment type="subunit">
    <text evidence="1">Self-assembles to form functional amyloid fibrils called rodlets. Self-assembly into fibrillar rodlets occurs spontaneously at hydrophobic:hydrophilic interfaces and the rodlets further associate laterally to form amphipathic monolayers.</text>
</comment>
<comment type="subcellular location">
    <subcellularLocation>
        <location evidence="3">Secreted</location>
    </subcellularLocation>
    <subcellularLocation>
        <location evidence="5">Secreted</location>
        <location evidence="5">Cell wall</location>
    </subcellularLocation>
</comment>
<comment type="developmental stage">
    <text evidence="3">Expressed in vegetative monokaryotic cells but not in the asexual oidia produced on the surface of monokaryons (PubMed:9344631). Expression is also very low in dikaryotic mycelia and absent from fruiting bodies (PubMed:9344631).</text>
</comment>
<comment type="similarity">
    <text evidence="5">Belongs to the fungal hydrophobin family.</text>
</comment>
<gene>
    <name evidence="4" type="primary">coH1</name>
</gene>
<feature type="signal peptide" evidence="2">
    <location>
        <begin position="1"/>
        <end position="17"/>
    </location>
</feature>
<feature type="chain" id="PRO_5013986901" description="Class I hydrophobin 1">
    <location>
        <begin position="18"/>
        <end position="113"/>
    </location>
</feature>
<feature type="disulfide bond" evidence="1">
    <location>
        <begin position="32"/>
        <end position="92"/>
    </location>
</feature>
<feature type="disulfide bond" evidence="1">
    <location>
        <begin position="39"/>
        <end position="86"/>
    </location>
</feature>
<feature type="disulfide bond" evidence="1">
    <location>
        <begin position="40"/>
        <end position="73"/>
    </location>
</feature>
<feature type="disulfide bond" evidence="1">
    <location>
        <begin position="93"/>
        <end position="106"/>
    </location>
</feature>
<reference key="1">
    <citation type="journal article" date="1997" name="Fungal Genet. Biol.">
        <title>Expression of two closely linked hydrophobin genes of Coprinus cinereus is monokaryon-specific and down-regulated by the oid-1 mutation.</title>
        <authorList>
            <person name="Asgeirsdottir S.A."/>
            <person name="Halsall J.R."/>
            <person name="Casselton L.A."/>
        </authorList>
    </citation>
    <scope>NUCLEOTIDE SEQUENCE [GENOMIC DNA]</scope>
    <scope>DEVELOPMENTAL STAGE</scope>
    <scope>SUBCELLULAR LOCATION</scope>
    <source>
        <strain>JV6</strain>
    </source>
</reference>
<dbReference type="EMBL" id="Y10627">
    <property type="protein sequence ID" value="CAA71652.1"/>
    <property type="molecule type" value="Genomic_DNA"/>
</dbReference>
<dbReference type="VEuPathDB" id="FungiDB:CC1G_02183"/>
<dbReference type="VEuPathDB" id="FungiDB:CC2G_002587"/>
<dbReference type="OMA" id="PITCCED"/>
<dbReference type="GO" id="GO:0005576">
    <property type="term" value="C:extracellular region"/>
    <property type="evidence" value="ECO:0007669"/>
    <property type="project" value="UniProtKB-KW"/>
</dbReference>
<dbReference type="GO" id="GO:0009277">
    <property type="term" value="C:fungal-type cell wall"/>
    <property type="evidence" value="ECO:0007669"/>
    <property type="project" value="InterPro"/>
</dbReference>
<dbReference type="GO" id="GO:0005199">
    <property type="term" value="F:structural constituent of cell wall"/>
    <property type="evidence" value="ECO:0007669"/>
    <property type="project" value="InterPro"/>
</dbReference>
<dbReference type="CDD" id="cd23507">
    <property type="entry name" value="hydrophobin_I"/>
    <property type="match status" value="1"/>
</dbReference>
<dbReference type="InterPro" id="IPR001338">
    <property type="entry name" value="Hydrophobin"/>
</dbReference>
<dbReference type="InterPro" id="IPR019778">
    <property type="entry name" value="Hydrophobin_CS"/>
</dbReference>
<dbReference type="Pfam" id="PF01185">
    <property type="entry name" value="Hydrophobin"/>
    <property type="match status" value="1"/>
</dbReference>
<dbReference type="SMART" id="SM00075">
    <property type="entry name" value="HYDRO"/>
    <property type="match status" value="1"/>
</dbReference>
<dbReference type="PROSITE" id="PS00956">
    <property type="entry name" value="HYDROPHOBIN"/>
    <property type="match status" value="1"/>
</dbReference>
<keyword id="KW-0134">Cell wall</keyword>
<keyword id="KW-1015">Disulfide bond</keyword>
<keyword id="KW-0964">Secreted</keyword>
<keyword id="KW-0732">Signal</keyword>
<evidence type="ECO:0000250" key="1">
    <source>
        <dbReference type="UniProtKB" id="Q04571"/>
    </source>
</evidence>
<evidence type="ECO:0000255" key="2"/>
<evidence type="ECO:0000269" key="3">
    <source>
    </source>
</evidence>
<evidence type="ECO:0000303" key="4">
    <source>
    </source>
</evidence>
<evidence type="ECO:0000305" key="5"/>
<protein>
    <recommendedName>
        <fullName evidence="4">Class I hydrophobin 1</fullName>
    </recommendedName>
</protein>
<accession>P78601</accession>
<sequence>MQFKFLSTVALATLAVAAPAPTDPTPIPPSQCNTGPIQCCNTVTQASNPVAGLLLGLLGIVLQDLNVLVGLTCSPISIIGLPGNSCNAQPVCCQNNNFNGLIAIGCTPININL</sequence>
<proteinExistence type="evidence at transcript level"/>
<name>COH1_COPCI</name>
<organism>
    <name type="scientific">Coprinopsis cinerea</name>
    <name type="common">Inky cap fungus</name>
    <name type="synonym">Hormographiella aspergillata</name>
    <dbReference type="NCBI Taxonomy" id="5346"/>
    <lineage>
        <taxon>Eukaryota</taxon>
        <taxon>Fungi</taxon>
        <taxon>Dikarya</taxon>
        <taxon>Basidiomycota</taxon>
        <taxon>Agaricomycotina</taxon>
        <taxon>Agaricomycetes</taxon>
        <taxon>Agaricomycetidae</taxon>
        <taxon>Agaricales</taxon>
        <taxon>Agaricineae</taxon>
        <taxon>Psathyrellaceae</taxon>
        <taxon>Coprinopsis</taxon>
    </lineage>
</organism>